<comment type="function">
    <text evidence="1">This protein is one of the two subunits of integration host factor, a specific DNA-binding protein that functions in genetic recombination as well as in transcriptional and translational control.</text>
</comment>
<comment type="subunit">
    <text evidence="1">Heterodimer of an alpha and a beta chain.</text>
</comment>
<comment type="similarity">
    <text evidence="1">Belongs to the bacterial histone-like protein family.</text>
</comment>
<keyword id="KW-0233">DNA recombination</keyword>
<keyword id="KW-0238">DNA-binding</keyword>
<keyword id="KW-0804">Transcription</keyword>
<keyword id="KW-0805">Transcription regulation</keyword>
<keyword id="KW-0810">Translation regulation</keyword>
<evidence type="ECO:0000255" key="1">
    <source>
        <dbReference type="HAMAP-Rule" id="MF_00381"/>
    </source>
</evidence>
<evidence type="ECO:0000256" key="2">
    <source>
        <dbReference type="SAM" id="MobiDB-lite"/>
    </source>
</evidence>
<accession>Q0BH90</accession>
<gene>
    <name evidence="1" type="primary">ihfB</name>
    <name evidence="1" type="synonym">himD</name>
    <name type="ordered locus">Bamb_0924</name>
</gene>
<dbReference type="EMBL" id="CP000440">
    <property type="protein sequence ID" value="ABI86483.1"/>
    <property type="molecule type" value="Genomic_DNA"/>
</dbReference>
<dbReference type="RefSeq" id="WP_006750752.1">
    <property type="nucleotide sequence ID" value="NZ_CP009798.1"/>
</dbReference>
<dbReference type="SMR" id="Q0BH90"/>
<dbReference type="KEGG" id="bam:Bamb_0924"/>
<dbReference type="PATRIC" id="fig|339670.21.peg.650"/>
<dbReference type="eggNOG" id="COG0776">
    <property type="taxonomic scope" value="Bacteria"/>
</dbReference>
<dbReference type="Proteomes" id="UP000000662">
    <property type="component" value="Chromosome 1"/>
</dbReference>
<dbReference type="GO" id="GO:0005694">
    <property type="term" value="C:chromosome"/>
    <property type="evidence" value="ECO:0007669"/>
    <property type="project" value="InterPro"/>
</dbReference>
<dbReference type="GO" id="GO:0005829">
    <property type="term" value="C:cytosol"/>
    <property type="evidence" value="ECO:0007669"/>
    <property type="project" value="TreeGrafter"/>
</dbReference>
<dbReference type="GO" id="GO:0003677">
    <property type="term" value="F:DNA binding"/>
    <property type="evidence" value="ECO:0007669"/>
    <property type="project" value="UniProtKB-UniRule"/>
</dbReference>
<dbReference type="GO" id="GO:0030527">
    <property type="term" value="F:structural constituent of chromatin"/>
    <property type="evidence" value="ECO:0007669"/>
    <property type="project" value="InterPro"/>
</dbReference>
<dbReference type="GO" id="GO:0006310">
    <property type="term" value="P:DNA recombination"/>
    <property type="evidence" value="ECO:0007669"/>
    <property type="project" value="UniProtKB-UniRule"/>
</dbReference>
<dbReference type="GO" id="GO:0006355">
    <property type="term" value="P:regulation of DNA-templated transcription"/>
    <property type="evidence" value="ECO:0007669"/>
    <property type="project" value="UniProtKB-UniRule"/>
</dbReference>
<dbReference type="GO" id="GO:0006417">
    <property type="term" value="P:regulation of translation"/>
    <property type="evidence" value="ECO:0007669"/>
    <property type="project" value="UniProtKB-UniRule"/>
</dbReference>
<dbReference type="CDD" id="cd13836">
    <property type="entry name" value="IHF_B"/>
    <property type="match status" value="1"/>
</dbReference>
<dbReference type="Gene3D" id="4.10.520.10">
    <property type="entry name" value="IHF-like DNA-binding proteins"/>
    <property type="match status" value="1"/>
</dbReference>
<dbReference type="HAMAP" id="MF_00381">
    <property type="entry name" value="IHF_beta"/>
    <property type="match status" value="1"/>
</dbReference>
<dbReference type="InterPro" id="IPR000119">
    <property type="entry name" value="Hist_DNA-bd"/>
</dbReference>
<dbReference type="InterPro" id="IPR010992">
    <property type="entry name" value="IHF-like_DNA-bd_dom_sf"/>
</dbReference>
<dbReference type="InterPro" id="IPR005685">
    <property type="entry name" value="IHF_beta"/>
</dbReference>
<dbReference type="NCBIfam" id="TIGR00988">
    <property type="entry name" value="hip"/>
    <property type="match status" value="1"/>
</dbReference>
<dbReference type="NCBIfam" id="NF001222">
    <property type="entry name" value="PRK00199.1"/>
    <property type="match status" value="1"/>
</dbReference>
<dbReference type="PANTHER" id="PTHR33175">
    <property type="entry name" value="DNA-BINDING PROTEIN HU"/>
    <property type="match status" value="1"/>
</dbReference>
<dbReference type="PANTHER" id="PTHR33175:SF5">
    <property type="entry name" value="INTEGRATION HOST FACTOR SUBUNIT BETA"/>
    <property type="match status" value="1"/>
</dbReference>
<dbReference type="Pfam" id="PF00216">
    <property type="entry name" value="Bac_DNA_binding"/>
    <property type="match status" value="1"/>
</dbReference>
<dbReference type="PRINTS" id="PR01727">
    <property type="entry name" value="DNABINDINGHU"/>
</dbReference>
<dbReference type="SMART" id="SM00411">
    <property type="entry name" value="BHL"/>
    <property type="match status" value="1"/>
</dbReference>
<dbReference type="SUPFAM" id="SSF47729">
    <property type="entry name" value="IHF-like DNA-binding proteins"/>
    <property type="match status" value="1"/>
</dbReference>
<organism>
    <name type="scientific">Burkholderia ambifaria (strain ATCC BAA-244 / DSM 16087 / CCUG 44356 / LMG 19182 / AMMD)</name>
    <name type="common">Burkholderia cepacia (strain AMMD)</name>
    <dbReference type="NCBI Taxonomy" id="339670"/>
    <lineage>
        <taxon>Bacteria</taxon>
        <taxon>Pseudomonadati</taxon>
        <taxon>Pseudomonadota</taxon>
        <taxon>Betaproteobacteria</taxon>
        <taxon>Burkholderiales</taxon>
        <taxon>Burkholderiaceae</taxon>
        <taxon>Burkholderia</taxon>
        <taxon>Burkholderia cepacia complex</taxon>
    </lineage>
</organism>
<name>IHFB_BURCM</name>
<protein>
    <recommendedName>
        <fullName evidence="1">Integration host factor subunit beta</fullName>
        <shortName evidence="1">IHF-beta</shortName>
    </recommendedName>
</protein>
<proteinExistence type="inferred from homology"/>
<feature type="chain" id="PRO_1000122192" description="Integration host factor subunit beta">
    <location>
        <begin position="1"/>
        <end position="107"/>
    </location>
</feature>
<feature type="region of interest" description="Disordered" evidence="2">
    <location>
        <begin position="56"/>
        <end position="107"/>
    </location>
</feature>
<feature type="compositionally biased region" description="Basic and acidic residues" evidence="2">
    <location>
        <begin position="82"/>
        <end position="101"/>
    </location>
</feature>
<sequence>MTKSELVAQLALRFPQLVLKDADFAVKTMLDAMSDALSKGHRIEIRGFGSFGLNRRPARVGRNPKSGEKVQVPEKFVPHFKPGKELRERVDGRAGEPLKADDPDDER</sequence>
<reference key="1">
    <citation type="submission" date="2006-08" db="EMBL/GenBank/DDBJ databases">
        <title>Complete sequence of chromosome 1 of Burkholderia cepacia AMMD.</title>
        <authorList>
            <person name="Copeland A."/>
            <person name="Lucas S."/>
            <person name="Lapidus A."/>
            <person name="Barry K."/>
            <person name="Detter J.C."/>
            <person name="Glavina del Rio T."/>
            <person name="Hammon N."/>
            <person name="Israni S."/>
            <person name="Pitluck S."/>
            <person name="Bruce D."/>
            <person name="Chain P."/>
            <person name="Malfatti S."/>
            <person name="Shin M."/>
            <person name="Vergez L."/>
            <person name="Schmutz J."/>
            <person name="Larimer F."/>
            <person name="Land M."/>
            <person name="Hauser L."/>
            <person name="Kyrpides N."/>
            <person name="Kim E."/>
            <person name="Parke J."/>
            <person name="Coenye T."/>
            <person name="Konstantinidis K."/>
            <person name="Ramette A."/>
            <person name="Tiedje J."/>
            <person name="Richardson P."/>
        </authorList>
    </citation>
    <scope>NUCLEOTIDE SEQUENCE [LARGE SCALE GENOMIC DNA]</scope>
    <source>
        <strain>ATCC BAA-244 / DSM 16087 / CCUG 44356 / LMG 19182 / AMMD</strain>
    </source>
</reference>